<name>Y3531_METJA</name>
<feature type="chain" id="PRO_0000156859" description="Putative antitoxin MJECL31">
    <location>
        <begin position="1"/>
        <end position="65"/>
    </location>
</feature>
<geneLocation type="plasmid">
    <name>large ECE</name>
</geneLocation>
<organism>
    <name type="scientific">Methanocaldococcus jannaschii (strain ATCC 43067 / DSM 2661 / JAL-1 / JCM 10045 / NBRC 100440)</name>
    <name type="common">Methanococcus jannaschii</name>
    <dbReference type="NCBI Taxonomy" id="243232"/>
    <lineage>
        <taxon>Archaea</taxon>
        <taxon>Methanobacteriati</taxon>
        <taxon>Methanobacteriota</taxon>
        <taxon>Methanomada group</taxon>
        <taxon>Methanococci</taxon>
        <taxon>Methanococcales</taxon>
        <taxon>Methanocaldococcaceae</taxon>
        <taxon>Methanocaldococcus</taxon>
    </lineage>
</organism>
<accession>Q60265</accession>
<proteinExistence type="inferred from homology"/>
<reference key="1">
    <citation type="journal article" date="1996" name="Science">
        <title>Complete genome sequence of the methanogenic archaeon, Methanococcus jannaschii.</title>
        <authorList>
            <person name="Bult C.J."/>
            <person name="White O."/>
            <person name="Olsen G.J."/>
            <person name="Zhou L."/>
            <person name="Fleischmann R.D."/>
            <person name="Sutton G.G."/>
            <person name="Blake J.A."/>
            <person name="FitzGerald L.M."/>
            <person name="Clayton R.A."/>
            <person name="Gocayne J.D."/>
            <person name="Kerlavage A.R."/>
            <person name="Dougherty B.A."/>
            <person name="Tomb J.-F."/>
            <person name="Adams M.D."/>
            <person name="Reich C.I."/>
            <person name="Overbeek R."/>
            <person name="Kirkness E.F."/>
            <person name="Weinstock K.G."/>
            <person name="Merrick J.M."/>
            <person name="Glodek A."/>
            <person name="Scott J.L."/>
            <person name="Geoghagen N.S.M."/>
            <person name="Weidman J.F."/>
            <person name="Fuhrmann J.L."/>
            <person name="Nguyen D."/>
            <person name="Utterback T.R."/>
            <person name="Kelley J.M."/>
            <person name="Peterson J.D."/>
            <person name="Sadow P.W."/>
            <person name="Hanna M.C."/>
            <person name="Cotton M.D."/>
            <person name="Roberts K.M."/>
            <person name="Hurst M.A."/>
            <person name="Kaine B.P."/>
            <person name="Borodovsky M."/>
            <person name="Klenk H.-P."/>
            <person name="Fraser C.M."/>
            <person name="Smith H.O."/>
            <person name="Woese C.R."/>
            <person name="Venter J.C."/>
        </authorList>
    </citation>
    <scope>NUCLEOTIDE SEQUENCE [LARGE SCALE GENOMIC DNA]</scope>
    <source>
        <strain>ATCC 43067 / DSM 2661 / JAL-1 / JCM 10045 / NBRC 100440</strain>
    </source>
</reference>
<gene>
    <name type="ordered locus">MJECL31</name>
</gene>
<dbReference type="EMBL" id="L77118">
    <property type="protein sequence ID" value="AAC37074.1"/>
    <property type="status" value="ALT_INIT"/>
    <property type="molecule type" value="Genomic_DNA"/>
</dbReference>
<dbReference type="PIR" id="F64513">
    <property type="entry name" value="F64513"/>
</dbReference>
<dbReference type="RefSeq" id="WP_064496999.1">
    <property type="nucleotide sequence ID" value="NC_001732.1"/>
</dbReference>
<dbReference type="SMR" id="Q60265"/>
<dbReference type="FunCoup" id="Q60265">
    <property type="interactions" value="1"/>
</dbReference>
<dbReference type="PaxDb" id="243232-MJ_ECL31"/>
<dbReference type="EnsemblBacteria" id="AAC37074">
    <property type="protein sequence ID" value="AAC37074"/>
    <property type="gene ID" value="MJ_ECL31"/>
</dbReference>
<dbReference type="GeneID" id="1450787"/>
<dbReference type="KEGG" id="mja:MJ_ECL31"/>
<dbReference type="eggNOG" id="arCOG07152">
    <property type="taxonomic scope" value="Archaea"/>
</dbReference>
<dbReference type="HOGENOM" id="CLU_200885_0_1_2"/>
<dbReference type="InParanoid" id="Q60265"/>
<dbReference type="Proteomes" id="UP000000805">
    <property type="component" value="Plasmid pDSM2661_1"/>
</dbReference>
<dbReference type="Gene3D" id="4.10.1150.10">
    <property type="entry name" value="AF2212/PG0164-like"/>
    <property type="match status" value="1"/>
</dbReference>
<dbReference type="InterPro" id="IPR008203">
    <property type="entry name" value="AF2212-like"/>
</dbReference>
<dbReference type="InterPro" id="IPR024069">
    <property type="entry name" value="AF2212-like_dom_sf"/>
</dbReference>
<dbReference type="Pfam" id="PF01954">
    <property type="entry name" value="AF2212-like"/>
    <property type="match status" value="1"/>
</dbReference>
<dbReference type="SUPFAM" id="SSF141694">
    <property type="entry name" value="AF2212/PG0164-like"/>
    <property type="match status" value="1"/>
</dbReference>
<protein>
    <recommendedName>
        <fullName>Putative antitoxin MJECL31</fullName>
    </recommendedName>
</protein>
<sequence>MSEIIEVIYEDGVLKPLKPLKIKGKKRLKIKIVNDDVEEFLKSMIIKKCKDIDYKKLKEAYYESF</sequence>
<comment type="function">
    <text evidence="1">Possibly the antitoxin component of a type II toxin-antitoxin (TA) system.</text>
</comment>
<comment type="similarity">
    <text evidence="1">Belongs to the UPF0165 family.</text>
</comment>
<comment type="sequence caution" evidence="1">
    <conflict type="erroneous initiation">
        <sequence resource="EMBL-CDS" id="AAC37074"/>
    </conflict>
    <text>Extended N-terminus.</text>
</comment>
<evidence type="ECO:0000305" key="1"/>
<keyword id="KW-0614">Plasmid</keyword>
<keyword id="KW-1185">Reference proteome</keyword>
<keyword id="KW-1277">Toxin-antitoxin system</keyword>